<evidence type="ECO:0000250" key="1"/>
<evidence type="ECO:0000250" key="2">
    <source>
        <dbReference type="UniProtKB" id="O18423"/>
    </source>
</evidence>
<evidence type="ECO:0000255" key="3"/>
<evidence type="ECO:0000305" key="4"/>
<protein>
    <recommendedName>
        <fullName>Lysenin-related protein 3</fullName>
        <shortName>LRP-3</shortName>
    </recommendedName>
    <alternativeName>
        <fullName>eflr3</fullName>
        <shortName>efL3</shortName>
    </alternativeName>
</protein>
<reference key="1">
    <citation type="journal article" date="2006" name="Dev. Comp. Immunol.">
        <title>Dissection of the mechanisms of cytolytic and antibacterial activity of lysenin, a defence protein of the annelid Eisenia fetida.</title>
        <authorList>
            <person name="Bruhn H."/>
            <person name="Winkelmann J."/>
            <person name="Andersen C."/>
            <person name="Andra J."/>
            <person name="Leippe M."/>
        </authorList>
    </citation>
    <scope>NUCLEOTIDE SEQUENCE [MRNA]</scope>
    <source>
        <tissue>Coelomocyte</tissue>
    </source>
</reference>
<accession>Q3LX99</accession>
<comment type="function">
    <text evidence="1">Pore-forming toxin that specifically binds sphingomyelin in the plasma membrane of various cells. Has antibacterial and hemolytic activity (By similarity).</text>
</comment>
<comment type="subunit">
    <text evidence="2">Binds to sphingomyelin as a monomer by using its C-terminal domain. Forms a nonamer when sphingomyelin/LRP-3 ratio is lower than ca 500. Oligomerization, but not binding, is influenced by the fluidity of sphingomyelin.</text>
</comment>
<comment type="subcellular location">
    <subcellularLocation>
        <location evidence="2">Secreted</location>
    </subcellularLocation>
    <subcellularLocation>
        <location evidence="2">Target cell membrane</location>
    </subcellularLocation>
    <text evidence="2">Forms a beta-barrel pore in the membrane.</text>
</comment>
<comment type="tissue specificity">
    <text>Expressed by coelomocytes.</text>
</comment>
<comment type="similarity">
    <text evidence="4">Belongs to the lysenin family.</text>
</comment>
<sequence>MSATAVTADGLEEIEVDVVAVWKEGYVYENRGDTSVEQKITMTKGMKNLNSETKTLTATHTVGRTLKVGDPFEIGSVEVSYSFSHQESQVSMTQTEVYSSQVIEHTVTIPPTSKFTRWKLNADVGGTDIEYMYLIDEVTPISVTQTIPQVIRSRAKILVGRQIHLGTTAVRIKHAERQEYMTVIERKKWPAATLGKSNLFKFVLFEDSSGTRIKTLNTMYPGYEWAYSSDQGGVYFDESSDNPKQRWALSKALPLRHGDVVTFMNKYFTNSGLCYDDGPATNVYCLDKREDKWILEVVNP</sequence>
<proteinExistence type="evidence at transcript level"/>
<feature type="chain" id="PRO_0000342609" description="Lysenin-related protein 3">
    <location>
        <begin position="1"/>
        <end position="300"/>
    </location>
</feature>
<feature type="region of interest" description="N-terminal cap domain" evidence="2">
    <location>
        <begin position="12"/>
        <end position="35"/>
    </location>
</feature>
<feature type="region of interest" description="Beta-hairpin domain" evidence="2">
    <location>
        <begin position="36"/>
        <end position="109"/>
    </location>
</feature>
<feature type="region of interest" description="N-terminal cap domain" evidence="2">
    <location>
        <begin position="110"/>
        <end position="158"/>
    </location>
</feature>
<feature type="region of interest" description="C-terminal receptor-binding domain" evidence="2">
    <location>
        <begin position="159"/>
        <end position="299"/>
    </location>
</feature>
<feature type="binding site" evidence="2">
    <location>
        <position position="187"/>
    </location>
    <ligand>
        <name>an N-(acyl)-sphingosylphosphocholine</name>
        <dbReference type="ChEBI" id="CHEBI:64583"/>
    </ligand>
</feature>
<feature type="binding site" evidence="2">
    <location>
        <position position="229"/>
    </location>
    <ligand>
        <name>an N-(acyl)-sphingosylphosphocholine</name>
        <dbReference type="ChEBI" id="CHEBI:64583"/>
    </ligand>
</feature>
<feature type="binding site" evidence="2">
    <location>
        <position position="235"/>
    </location>
    <ligand>
        <name>an N-(acyl)-sphingosylphosphocholine</name>
        <dbReference type="ChEBI" id="CHEBI:64583"/>
    </ligand>
</feature>
<feature type="binding site" evidence="2">
    <location>
        <position position="284"/>
    </location>
    <ligand>
        <name>an N-(acyl)-sphingosylphosphocholine</name>
        <dbReference type="ChEBI" id="CHEBI:64583"/>
    </ligand>
</feature>
<feature type="site" description="Crucial for binding sphingomyelin and inducing hemolysis" evidence="1">
    <location>
        <position position="22"/>
    </location>
</feature>
<feature type="site" description="Crucial for binding sphingomyelin and important for inducing hemolysis" evidence="1">
    <location>
        <position position="189"/>
    </location>
</feature>
<feature type="site" description="Crucial for binding sphingomyelin and inducing hemolysis" evidence="1">
    <location>
        <position position="247"/>
    </location>
</feature>
<feature type="site" description="Crucial for binding sphingomyelin and inducing hemolysis" evidence="1">
    <location>
        <position position="293"/>
    </location>
</feature>
<feature type="disulfide bond" evidence="3">
    <location>
        <begin position="274"/>
        <end position="285"/>
    </location>
</feature>
<name>TXLR3_EISFE</name>
<keyword id="KW-0044">Antibiotic</keyword>
<keyword id="KW-0929">Antimicrobial</keyword>
<keyword id="KW-0204">Cytolysis</keyword>
<keyword id="KW-1015">Disulfide bond</keyword>
<keyword id="KW-0354">Hemolysis</keyword>
<keyword id="KW-0406">Ion transport</keyword>
<keyword id="KW-0472">Membrane</keyword>
<keyword id="KW-0964">Secreted</keyword>
<keyword id="KW-1052">Target cell membrane</keyword>
<keyword id="KW-1053">Target membrane</keyword>
<keyword id="KW-0800">Toxin</keyword>
<keyword id="KW-0812">Transmembrane</keyword>
<keyword id="KW-0813">Transport</keyword>
<dbReference type="EMBL" id="DQ144453">
    <property type="protein sequence ID" value="ABA18726.1"/>
    <property type="molecule type" value="mRNA"/>
</dbReference>
<dbReference type="SMR" id="Q3LX99"/>
<dbReference type="TCDB" id="1.C.43.1.3">
    <property type="family name" value="the earthworm lysenin toxin (lysenin) family"/>
</dbReference>
<dbReference type="GO" id="GO:0005576">
    <property type="term" value="C:extracellular region"/>
    <property type="evidence" value="ECO:0007669"/>
    <property type="project" value="UniProtKB-SubCell"/>
</dbReference>
<dbReference type="GO" id="GO:0016020">
    <property type="term" value="C:membrane"/>
    <property type="evidence" value="ECO:0007669"/>
    <property type="project" value="UniProtKB-KW"/>
</dbReference>
<dbReference type="GO" id="GO:0044218">
    <property type="term" value="C:other organism cell membrane"/>
    <property type="evidence" value="ECO:0007669"/>
    <property type="project" value="UniProtKB-KW"/>
</dbReference>
<dbReference type="GO" id="GO:0090729">
    <property type="term" value="F:toxin activity"/>
    <property type="evidence" value="ECO:0007669"/>
    <property type="project" value="UniProtKB-KW"/>
</dbReference>
<dbReference type="GO" id="GO:0042742">
    <property type="term" value="P:defense response to bacterium"/>
    <property type="evidence" value="ECO:0007669"/>
    <property type="project" value="UniProtKB-KW"/>
</dbReference>
<dbReference type="GO" id="GO:0031640">
    <property type="term" value="P:killing of cells of another organism"/>
    <property type="evidence" value="ECO:0007669"/>
    <property type="project" value="UniProtKB-KW"/>
</dbReference>
<dbReference type="GO" id="GO:0006811">
    <property type="term" value="P:monoatomic ion transport"/>
    <property type="evidence" value="ECO:0007669"/>
    <property type="project" value="UniProtKB-KW"/>
</dbReference>
<dbReference type="CDD" id="cd20225">
    <property type="entry name" value="PFM_lysenin-like"/>
    <property type="match status" value="1"/>
</dbReference>
<dbReference type="Gene3D" id="2.60.120.980">
    <property type="match status" value="1"/>
</dbReference>
<dbReference type="Gene3D" id="2.80.10.50">
    <property type="match status" value="1"/>
</dbReference>
<dbReference type="SUPFAM" id="SSF56973">
    <property type="entry name" value="Aerolisin/ETX pore-forming domain"/>
    <property type="match status" value="1"/>
</dbReference>
<organism>
    <name type="scientific">Eisenia fetida</name>
    <name type="common">Red wiggler worm</name>
    <dbReference type="NCBI Taxonomy" id="6396"/>
    <lineage>
        <taxon>Eukaryota</taxon>
        <taxon>Metazoa</taxon>
        <taxon>Spiralia</taxon>
        <taxon>Lophotrochozoa</taxon>
        <taxon>Annelida</taxon>
        <taxon>Clitellata</taxon>
        <taxon>Oligochaeta</taxon>
        <taxon>Crassiclitellata</taxon>
        <taxon>Lumbricina</taxon>
        <taxon>Lumbricidae</taxon>
        <taxon>Lumbricinae</taxon>
        <taxon>Eisenia</taxon>
    </lineage>
</organism>